<gene>
    <name evidence="4 6" type="primary">Saysd1</name>
    <name evidence="6" type="ORF">CG13663</name>
</gene>
<feature type="chain" id="PRO_0000460584" description="SAYSvFN domain-containing protein 1">
    <location>
        <begin position="1"/>
        <end position="177"/>
    </location>
</feature>
<feature type="topological domain" description="Cytoplasmic" evidence="1">
    <location>
        <begin position="1"/>
        <end position="100"/>
    </location>
</feature>
<feature type="intramembrane region" description="Helical" evidence="1">
    <location>
        <begin position="101"/>
        <end position="121"/>
    </location>
</feature>
<feature type="topological domain" description="Cytoplasmic" evidence="1">
    <location>
        <begin position="122"/>
        <end position="177"/>
    </location>
</feature>
<feature type="region of interest" description="Disordered" evidence="2">
    <location>
        <begin position="57"/>
        <end position="85"/>
    </location>
</feature>
<feature type="compositionally biased region" description="Polar residues" evidence="2">
    <location>
        <begin position="57"/>
        <end position="70"/>
    </location>
</feature>
<comment type="function">
    <text evidence="1 3">Ufmylation 'reader' component of a translocation-associated quality control pathway, a mechanism that takes place when a ribosome has stalled during translation, and which is required to degrade clogged substrates (PubMed:36848233). Specifically recognizes and binds ufmylated ribosomes when a ribosome has stalled, promoting the transport of stalled nascent chain to lysosomes for degradation (By similarity).</text>
</comment>
<comment type="subcellular location">
    <subcellularLocation>
        <location evidence="1">Endoplasmic reticulum membrane</location>
    </subcellularLocation>
</comment>
<comment type="similarity">
    <text evidence="5">Belongs to the SAYSD1 family.</text>
</comment>
<comment type="sequence caution" evidence="5">
    <conflict type="erroneous initiation">
        <sequence resource="EMBL-CDS" id="AAY85008"/>
    </conflict>
    <text>Extended N-terminus.</text>
</comment>
<keyword id="KW-0256">Endoplasmic reticulum</keyword>
<keyword id="KW-0472">Membrane</keyword>
<keyword id="KW-1185">Reference proteome</keyword>
<name>SAYS1_DROME</name>
<organism>
    <name type="scientific">Drosophila melanogaster</name>
    <name type="common">Fruit fly</name>
    <dbReference type="NCBI Taxonomy" id="7227"/>
    <lineage>
        <taxon>Eukaryota</taxon>
        <taxon>Metazoa</taxon>
        <taxon>Ecdysozoa</taxon>
        <taxon>Arthropoda</taxon>
        <taxon>Hexapoda</taxon>
        <taxon>Insecta</taxon>
        <taxon>Pterygota</taxon>
        <taxon>Neoptera</taxon>
        <taxon>Endopterygota</taxon>
        <taxon>Diptera</taxon>
        <taxon>Brachycera</taxon>
        <taxon>Muscomorpha</taxon>
        <taxon>Ephydroidea</taxon>
        <taxon>Drosophilidae</taxon>
        <taxon>Drosophila</taxon>
        <taxon>Sophophora</taxon>
    </lineage>
</organism>
<evidence type="ECO:0000250" key="1">
    <source>
        <dbReference type="UniProtKB" id="Q9NPB0"/>
    </source>
</evidence>
<evidence type="ECO:0000256" key="2">
    <source>
        <dbReference type="SAM" id="MobiDB-lite"/>
    </source>
</evidence>
<evidence type="ECO:0000269" key="3">
    <source>
    </source>
</evidence>
<evidence type="ECO:0000303" key="4">
    <source>
    </source>
</evidence>
<evidence type="ECO:0000305" key="5"/>
<evidence type="ECO:0000312" key="6">
    <source>
        <dbReference type="FlyBase" id="FBgn0039291"/>
    </source>
</evidence>
<sequence>MADFQEQLRQYRAQKRRKETVDNFKDKLRRFWMLGTGANKDTTIEVQQVPTKFEAISENSQDEAVTSSESELVPEEQPTRSTDHHHKENNCLKYTLWTVYLLFWITLYVIAIKLSFGLVFLMFSALFGIYFNTRTEPKKRNEMSAYSVFNKNCESIDGTLKAEQFEREIRYGSGSVR</sequence>
<dbReference type="EMBL" id="AE014297">
    <property type="protein sequence ID" value="AAF56417.1"/>
    <property type="molecule type" value="Genomic_DNA"/>
</dbReference>
<dbReference type="EMBL" id="BT023608">
    <property type="protein sequence ID" value="AAY85008.1"/>
    <property type="status" value="ALT_INIT"/>
    <property type="molecule type" value="mRNA"/>
</dbReference>
<dbReference type="RefSeq" id="NP_651351.1">
    <property type="nucleotide sequence ID" value="NM_143094.3"/>
</dbReference>
<dbReference type="FunCoup" id="Q9VBW0">
    <property type="interactions" value="3"/>
</dbReference>
<dbReference type="STRING" id="7227.FBpp0084247"/>
<dbReference type="SwissPalm" id="Q9VBW0"/>
<dbReference type="PaxDb" id="7227-FBpp0084247"/>
<dbReference type="DNASU" id="43029"/>
<dbReference type="EnsemblMetazoa" id="FBtr0084873">
    <property type="protein sequence ID" value="FBpp0084247"/>
    <property type="gene ID" value="FBgn0039291"/>
</dbReference>
<dbReference type="GeneID" id="43029"/>
<dbReference type="KEGG" id="dme:Dmel_CG13663"/>
<dbReference type="UCSC" id="CG13663-RA">
    <property type="organism name" value="d. melanogaster"/>
</dbReference>
<dbReference type="AGR" id="FB:FBgn0039291"/>
<dbReference type="CTD" id="55776"/>
<dbReference type="FlyBase" id="FBgn0039291">
    <property type="gene designation" value="Saysd1"/>
</dbReference>
<dbReference type="VEuPathDB" id="VectorBase:FBgn0039291"/>
<dbReference type="eggNOG" id="KOG3249">
    <property type="taxonomic scope" value="Eukaryota"/>
</dbReference>
<dbReference type="GeneTree" id="ENSGT00390000004313"/>
<dbReference type="HOGENOM" id="CLU_114258_1_0_1"/>
<dbReference type="InParanoid" id="Q9VBW0"/>
<dbReference type="OMA" id="CLKYTLW"/>
<dbReference type="OrthoDB" id="71310at2759"/>
<dbReference type="PhylomeDB" id="Q9VBW0"/>
<dbReference type="BioGRID-ORCS" id="43029">
    <property type="hits" value="0 hits in 1 CRISPR screen"/>
</dbReference>
<dbReference type="GenomeRNAi" id="43029"/>
<dbReference type="Proteomes" id="UP000000803">
    <property type="component" value="Chromosome 3R"/>
</dbReference>
<dbReference type="Bgee" id="FBgn0039291">
    <property type="expression patterns" value="Expressed in adult anterior midgut class I enteroendocrine cell in adult midgut (Drosophila) and 78 other cell types or tissues"/>
</dbReference>
<dbReference type="ExpressionAtlas" id="Q9VBW0">
    <property type="expression patterns" value="baseline and differential"/>
</dbReference>
<dbReference type="GO" id="GO:0005789">
    <property type="term" value="C:endoplasmic reticulum membrane"/>
    <property type="evidence" value="ECO:0007669"/>
    <property type="project" value="UniProtKB-SubCell"/>
</dbReference>
<dbReference type="GO" id="GO:0006515">
    <property type="term" value="P:protein quality control for misfolded or incompletely synthesized proteins"/>
    <property type="evidence" value="ECO:0000315"/>
    <property type="project" value="FlyBase"/>
</dbReference>
<dbReference type="InterPro" id="IPR039159">
    <property type="entry name" value="SAYSD1"/>
</dbReference>
<dbReference type="InterPro" id="IPR019387">
    <property type="entry name" value="SAYSvFN_dom"/>
</dbReference>
<dbReference type="PANTHER" id="PTHR13527">
    <property type="entry name" value="SAYSVFN DOMAIN-CONTAINING PROTEIN 1"/>
    <property type="match status" value="1"/>
</dbReference>
<dbReference type="PANTHER" id="PTHR13527:SF0">
    <property type="entry name" value="SAYSVFN DOMAIN-CONTAINING PROTEIN 1"/>
    <property type="match status" value="1"/>
</dbReference>
<dbReference type="Pfam" id="PF10260">
    <property type="entry name" value="SAYSvFN"/>
    <property type="match status" value="1"/>
</dbReference>
<reference key="1">
    <citation type="journal article" date="2000" name="Science">
        <title>The genome sequence of Drosophila melanogaster.</title>
        <authorList>
            <person name="Adams M.D."/>
            <person name="Celniker S.E."/>
            <person name="Holt R.A."/>
            <person name="Evans C.A."/>
            <person name="Gocayne J.D."/>
            <person name="Amanatides P.G."/>
            <person name="Scherer S.E."/>
            <person name="Li P.W."/>
            <person name="Hoskins R.A."/>
            <person name="Galle R.F."/>
            <person name="George R.A."/>
            <person name="Lewis S.E."/>
            <person name="Richards S."/>
            <person name="Ashburner M."/>
            <person name="Henderson S.N."/>
            <person name="Sutton G.G."/>
            <person name="Wortman J.R."/>
            <person name="Yandell M.D."/>
            <person name="Zhang Q."/>
            <person name="Chen L.X."/>
            <person name="Brandon R.C."/>
            <person name="Rogers Y.-H.C."/>
            <person name="Blazej R.G."/>
            <person name="Champe M."/>
            <person name="Pfeiffer B.D."/>
            <person name="Wan K.H."/>
            <person name="Doyle C."/>
            <person name="Baxter E.G."/>
            <person name="Helt G."/>
            <person name="Nelson C.R."/>
            <person name="Miklos G.L.G."/>
            <person name="Abril J.F."/>
            <person name="Agbayani A."/>
            <person name="An H.-J."/>
            <person name="Andrews-Pfannkoch C."/>
            <person name="Baldwin D."/>
            <person name="Ballew R.M."/>
            <person name="Basu A."/>
            <person name="Baxendale J."/>
            <person name="Bayraktaroglu L."/>
            <person name="Beasley E.M."/>
            <person name="Beeson K.Y."/>
            <person name="Benos P.V."/>
            <person name="Berman B.P."/>
            <person name="Bhandari D."/>
            <person name="Bolshakov S."/>
            <person name="Borkova D."/>
            <person name="Botchan M.R."/>
            <person name="Bouck J."/>
            <person name="Brokstein P."/>
            <person name="Brottier P."/>
            <person name="Burtis K.C."/>
            <person name="Busam D.A."/>
            <person name="Butler H."/>
            <person name="Cadieu E."/>
            <person name="Center A."/>
            <person name="Chandra I."/>
            <person name="Cherry J.M."/>
            <person name="Cawley S."/>
            <person name="Dahlke C."/>
            <person name="Davenport L.B."/>
            <person name="Davies P."/>
            <person name="de Pablos B."/>
            <person name="Delcher A."/>
            <person name="Deng Z."/>
            <person name="Mays A.D."/>
            <person name="Dew I."/>
            <person name="Dietz S.M."/>
            <person name="Dodson K."/>
            <person name="Doup L.E."/>
            <person name="Downes M."/>
            <person name="Dugan-Rocha S."/>
            <person name="Dunkov B.C."/>
            <person name="Dunn P."/>
            <person name="Durbin K.J."/>
            <person name="Evangelista C.C."/>
            <person name="Ferraz C."/>
            <person name="Ferriera S."/>
            <person name="Fleischmann W."/>
            <person name="Fosler C."/>
            <person name="Gabrielian A.E."/>
            <person name="Garg N.S."/>
            <person name="Gelbart W.M."/>
            <person name="Glasser K."/>
            <person name="Glodek A."/>
            <person name="Gong F."/>
            <person name="Gorrell J.H."/>
            <person name="Gu Z."/>
            <person name="Guan P."/>
            <person name="Harris M."/>
            <person name="Harris N.L."/>
            <person name="Harvey D.A."/>
            <person name="Heiman T.J."/>
            <person name="Hernandez J.R."/>
            <person name="Houck J."/>
            <person name="Hostin D."/>
            <person name="Houston K.A."/>
            <person name="Howland T.J."/>
            <person name="Wei M.-H."/>
            <person name="Ibegwam C."/>
            <person name="Jalali M."/>
            <person name="Kalush F."/>
            <person name="Karpen G.H."/>
            <person name="Ke Z."/>
            <person name="Kennison J.A."/>
            <person name="Ketchum K.A."/>
            <person name="Kimmel B.E."/>
            <person name="Kodira C.D."/>
            <person name="Kraft C.L."/>
            <person name="Kravitz S."/>
            <person name="Kulp D."/>
            <person name="Lai Z."/>
            <person name="Lasko P."/>
            <person name="Lei Y."/>
            <person name="Levitsky A.A."/>
            <person name="Li J.H."/>
            <person name="Li Z."/>
            <person name="Liang Y."/>
            <person name="Lin X."/>
            <person name="Liu X."/>
            <person name="Mattei B."/>
            <person name="McIntosh T.C."/>
            <person name="McLeod M.P."/>
            <person name="McPherson D."/>
            <person name="Merkulov G."/>
            <person name="Milshina N.V."/>
            <person name="Mobarry C."/>
            <person name="Morris J."/>
            <person name="Moshrefi A."/>
            <person name="Mount S.M."/>
            <person name="Moy M."/>
            <person name="Murphy B."/>
            <person name="Murphy L."/>
            <person name="Muzny D.M."/>
            <person name="Nelson D.L."/>
            <person name="Nelson D.R."/>
            <person name="Nelson K.A."/>
            <person name="Nixon K."/>
            <person name="Nusskern D.R."/>
            <person name="Pacleb J.M."/>
            <person name="Palazzolo M."/>
            <person name="Pittman G.S."/>
            <person name="Pan S."/>
            <person name="Pollard J."/>
            <person name="Puri V."/>
            <person name="Reese M.G."/>
            <person name="Reinert K."/>
            <person name="Remington K."/>
            <person name="Saunders R.D.C."/>
            <person name="Scheeler F."/>
            <person name="Shen H."/>
            <person name="Shue B.C."/>
            <person name="Siden-Kiamos I."/>
            <person name="Simpson M."/>
            <person name="Skupski M.P."/>
            <person name="Smith T.J."/>
            <person name="Spier E."/>
            <person name="Spradling A.C."/>
            <person name="Stapleton M."/>
            <person name="Strong R."/>
            <person name="Sun E."/>
            <person name="Svirskas R."/>
            <person name="Tector C."/>
            <person name="Turner R."/>
            <person name="Venter E."/>
            <person name="Wang A.H."/>
            <person name="Wang X."/>
            <person name="Wang Z.-Y."/>
            <person name="Wassarman D.A."/>
            <person name="Weinstock G.M."/>
            <person name="Weissenbach J."/>
            <person name="Williams S.M."/>
            <person name="Woodage T."/>
            <person name="Worley K.C."/>
            <person name="Wu D."/>
            <person name="Yang S."/>
            <person name="Yao Q.A."/>
            <person name="Ye J."/>
            <person name="Yeh R.-F."/>
            <person name="Zaveri J.S."/>
            <person name="Zhan M."/>
            <person name="Zhang G."/>
            <person name="Zhao Q."/>
            <person name="Zheng L."/>
            <person name="Zheng X.H."/>
            <person name="Zhong F.N."/>
            <person name="Zhong W."/>
            <person name="Zhou X."/>
            <person name="Zhu S.C."/>
            <person name="Zhu X."/>
            <person name="Smith H.O."/>
            <person name="Gibbs R.A."/>
            <person name="Myers E.W."/>
            <person name="Rubin G.M."/>
            <person name="Venter J.C."/>
        </authorList>
    </citation>
    <scope>NUCLEOTIDE SEQUENCE [LARGE SCALE GENOMIC DNA]</scope>
    <source>
        <strain>Berkeley</strain>
    </source>
</reference>
<reference key="2">
    <citation type="journal article" date="2002" name="Genome Biol.">
        <title>Annotation of the Drosophila melanogaster euchromatic genome: a systematic review.</title>
        <authorList>
            <person name="Misra S."/>
            <person name="Crosby M.A."/>
            <person name="Mungall C.J."/>
            <person name="Matthews B.B."/>
            <person name="Campbell K.S."/>
            <person name="Hradecky P."/>
            <person name="Huang Y."/>
            <person name="Kaminker J.S."/>
            <person name="Millburn G.H."/>
            <person name="Prochnik S.E."/>
            <person name="Smith C.D."/>
            <person name="Tupy J.L."/>
            <person name="Whitfield E.J."/>
            <person name="Bayraktaroglu L."/>
            <person name="Berman B.P."/>
            <person name="Bettencourt B.R."/>
            <person name="Celniker S.E."/>
            <person name="de Grey A.D.N.J."/>
            <person name="Drysdale R.A."/>
            <person name="Harris N.L."/>
            <person name="Richter J."/>
            <person name="Russo S."/>
            <person name="Schroeder A.J."/>
            <person name="Shu S.Q."/>
            <person name="Stapleton M."/>
            <person name="Yamada C."/>
            <person name="Ashburner M."/>
            <person name="Gelbart W.M."/>
            <person name="Rubin G.M."/>
            <person name="Lewis S.E."/>
        </authorList>
    </citation>
    <scope>GENOME REANNOTATION</scope>
    <source>
        <strain>Berkeley</strain>
    </source>
</reference>
<reference key="3">
    <citation type="submission" date="2005-06" db="EMBL/GenBank/DDBJ databases">
        <authorList>
            <person name="Stapleton M."/>
            <person name="Carlson J."/>
            <person name="Chavez C."/>
            <person name="Frise E."/>
            <person name="George R."/>
            <person name="Pacleb J."/>
            <person name="Park S."/>
            <person name="Wan K."/>
            <person name="Yu C."/>
            <person name="Celniker S."/>
        </authorList>
    </citation>
    <scope>NUCLEOTIDE SEQUENCE [LARGE SCALE MRNA]</scope>
    <source>
        <strain>Berkeley</strain>
    </source>
</reference>
<reference key="4">
    <citation type="journal article" date="2023" name="Cell Rep.">
        <title>SAYSD1 senses UFMylated ribosome to safeguard co-translational protein translocation at the endoplasmic reticulum.</title>
        <authorList>
            <person name="Wang L."/>
            <person name="Xu Y."/>
            <person name="Yun S."/>
            <person name="Yuan Q."/>
            <person name="Satpute-Krishnan P."/>
            <person name="Ye Y."/>
        </authorList>
    </citation>
    <scope>FUNCTION</scope>
</reference>
<protein>
    <recommendedName>
        <fullName evidence="5">SAYSvFN domain-containing protein 1</fullName>
    </recommendedName>
</protein>
<accession>Q9VBW0</accession>
<accession>Q4QQ08</accession>
<proteinExistence type="evidence at transcript level"/>